<reference key="1">
    <citation type="journal article" date="2002" name="Proc. Natl. Acad. Sci. U.S.A.">
        <title>The genome sequence of the facultative intracellular pathogen Brucella melitensis.</title>
        <authorList>
            <person name="DelVecchio V.G."/>
            <person name="Kapatral V."/>
            <person name="Redkar R.J."/>
            <person name="Patra G."/>
            <person name="Mujer C."/>
            <person name="Los T."/>
            <person name="Ivanova N."/>
            <person name="Anderson I."/>
            <person name="Bhattacharyya A."/>
            <person name="Lykidis A."/>
            <person name="Reznik G."/>
            <person name="Jablonski L."/>
            <person name="Larsen N."/>
            <person name="D'Souza M."/>
            <person name="Bernal A."/>
            <person name="Mazur M."/>
            <person name="Goltsman E."/>
            <person name="Selkov E."/>
            <person name="Elzer P.H."/>
            <person name="Hagius S."/>
            <person name="O'Callaghan D."/>
            <person name="Letesson J.-J."/>
            <person name="Haselkorn R."/>
            <person name="Kyrpides N.C."/>
            <person name="Overbeek R."/>
        </authorList>
    </citation>
    <scope>NUCLEOTIDE SEQUENCE [LARGE SCALE GENOMIC DNA]</scope>
    <source>
        <strain>ATCC 23456 / CCUG 17765 / NCTC 10094 / 16M</strain>
    </source>
</reference>
<protein>
    <recommendedName>
        <fullName evidence="1">Cytochrome c-type biogenesis protein CcmE</fullName>
    </recommendedName>
    <alternativeName>
        <fullName evidence="1">Cytochrome c maturation protein E</fullName>
    </alternativeName>
    <alternativeName>
        <fullName evidence="1">Heme chaperone CcmE</fullName>
    </alternativeName>
</protein>
<comment type="function">
    <text evidence="1">Heme chaperone required for the biogenesis of c-type cytochromes. Transiently binds heme delivered by CcmC and transfers the heme to apo-cytochromes in a process facilitated by CcmF and CcmH.</text>
</comment>
<comment type="subcellular location">
    <subcellularLocation>
        <location evidence="1">Cell inner membrane</location>
        <topology evidence="1">Single-pass type II membrane protein</topology>
        <orientation evidence="1">Periplasmic side</orientation>
    </subcellularLocation>
</comment>
<comment type="similarity">
    <text evidence="1">Belongs to the CcmE/CycJ family.</text>
</comment>
<sequence>MSATAEQNARNPKGKGGFARTVSQRKRKRLFLIGGALAVLAVAVGLMLTAFNQDIRFFRTPADLTEQDMTSGARFRLGGLVEEGSVSRTGSELRFTVTDTIKTVKVVFEGIPPDLFREGQGVVAEGRFGSDGLFRADNVLAKHDENYVPKDLADSLKKKGVWEGK</sequence>
<feature type="chain" id="PRO_0000238800" description="Cytochrome c-type biogenesis protein CcmE">
    <location>
        <begin position="1"/>
        <end position="165"/>
    </location>
</feature>
<feature type="topological domain" description="Cytoplasmic" evidence="1">
    <location>
        <begin position="1"/>
        <end position="29"/>
    </location>
</feature>
<feature type="transmembrane region" description="Helical; Signal-anchor for type II membrane protein" evidence="1">
    <location>
        <begin position="30"/>
        <end position="50"/>
    </location>
</feature>
<feature type="topological domain" description="Periplasmic" evidence="1">
    <location>
        <begin position="51"/>
        <end position="165"/>
    </location>
</feature>
<feature type="binding site" description="covalent" evidence="1">
    <location>
        <position position="143"/>
    </location>
    <ligand>
        <name>heme</name>
        <dbReference type="ChEBI" id="CHEBI:30413"/>
    </ligand>
</feature>
<feature type="binding site" description="axial binding residue" evidence="1">
    <location>
        <position position="147"/>
    </location>
    <ligand>
        <name>heme</name>
        <dbReference type="ChEBI" id="CHEBI:30413"/>
    </ligand>
    <ligandPart>
        <name>Fe</name>
        <dbReference type="ChEBI" id="CHEBI:18248"/>
    </ligandPart>
</feature>
<keyword id="KW-0997">Cell inner membrane</keyword>
<keyword id="KW-1003">Cell membrane</keyword>
<keyword id="KW-0201">Cytochrome c-type biogenesis</keyword>
<keyword id="KW-0349">Heme</keyword>
<keyword id="KW-0408">Iron</keyword>
<keyword id="KW-0472">Membrane</keyword>
<keyword id="KW-0479">Metal-binding</keyword>
<keyword id="KW-0735">Signal-anchor</keyword>
<keyword id="KW-0812">Transmembrane</keyword>
<keyword id="KW-1133">Transmembrane helix</keyword>
<evidence type="ECO:0000255" key="1">
    <source>
        <dbReference type="HAMAP-Rule" id="MF_01959"/>
    </source>
</evidence>
<organism>
    <name type="scientific">Brucella melitensis biotype 1 (strain ATCC 23456 / CCUG 17765 / NCTC 10094 / 16M)</name>
    <dbReference type="NCBI Taxonomy" id="224914"/>
    <lineage>
        <taxon>Bacteria</taxon>
        <taxon>Pseudomonadati</taxon>
        <taxon>Pseudomonadota</taxon>
        <taxon>Alphaproteobacteria</taxon>
        <taxon>Hyphomicrobiales</taxon>
        <taxon>Brucellaceae</taxon>
        <taxon>Brucella/Ochrobactrum group</taxon>
        <taxon>Brucella</taxon>
    </lineage>
</organism>
<proteinExistence type="inferred from homology"/>
<name>CCME_BRUME</name>
<gene>
    <name evidence="1" type="primary">ccmE</name>
    <name evidence="1" type="synonym">cycJ</name>
    <name type="ordered locus">BMEI1333</name>
</gene>
<dbReference type="EMBL" id="AE008917">
    <property type="protein sequence ID" value="AAL52514.1"/>
    <property type="molecule type" value="Genomic_DNA"/>
</dbReference>
<dbReference type="PIR" id="AG3418">
    <property type="entry name" value="AG3418"/>
</dbReference>
<dbReference type="RefSeq" id="WP_002963757.1">
    <property type="nucleotide sequence ID" value="NZ_GG703778.1"/>
</dbReference>
<dbReference type="SMR" id="Q8YG29"/>
<dbReference type="GeneID" id="97534052"/>
<dbReference type="KEGG" id="bme:BMEI1333"/>
<dbReference type="KEGG" id="bmel:DK63_70"/>
<dbReference type="PATRIC" id="fig|224914.52.peg.73"/>
<dbReference type="eggNOG" id="COG2332">
    <property type="taxonomic scope" value="Bacteria"/>
</dbReference>
<dbReference type="PhylomeDB" id="Q8YG29"/>
<dbReference type="Proteomes" id="UP000000419">
    <property type="component" value="Chromosome I"/>
</dbReference>
<dbReference type="GO" id="GO:0005886">
    <property type="term" value="C:plasma membrane"/>
    <property type="evidence" value="ECO:0007669"/>
    <property type="project" value="UniProtKB-SubCell"/>
</dbReference>
<dbReference type="GO" id="GO:0020037">
    <property type="term" value="F:heme binding"/>
    <property type="evidence" value="ECO:0007669"/>
    <property type="project" value="InterPro"/>
</dbReference>
<dbReference type="GO" id="GO:0046872">
    <property type="term" value="F:metal ion binding"/>
    <property type="evidence" value="ECO:0007669"/>
    <property type="project" value="UniProtKB-KW"/>
</dbReference>
<dbReference type="GO" id="GO:0017004">
    <property type="term" value="P:cytochrome complex assembly"/>
    <property type="evidence" value="ECO:0007669"/>
    <property type="project" value="UniProtKB-KW"/>
</dbReference>
<dbReference type="Gene3D" id="2.40.50.140">
    <property type="entry name" value="Nucleic acid-binding proteins"/>
    <property type="match status" value="1"/>
</dbReference>
<dbReference type="HAMAP" id="MF_01959">
    <property type="entry name" value="CcmE"/>
    <property type="match status" value="1"/>
</dbReference>
<dbReference type="InterPro" id="IPR004329">
    <property type="entry name" value="CcmE"/>
</dbReference>
<dbReference type="InterPro" id="IPR036127">
    <property type="entry name" value="CcmE-like_sf"/>
</dbReference>
<dbReference type="InterPro" id="IPR012340">
    <property type="entry name" value="NA-bd_OB-fold"/>
</dbReference>
<dbReference type="NCBIfam" id="NF009727">
    <property type="entry name" value="PRK13254.1-1"/>
    <property type="match status" value="1"/>
</dbReference>
<dbReference type="NCBIfam" id="NF009730">
    <property type="entry name" value="PRK13254.1-4"/>
    <property type="match status" value="1"/>
</dbReference>
<dbReference type="NCBIfam" id="NF009731">
    <property type="entry name" value="PRK13254.1-5"/>
    <property type="match status" value="1"/>
</dbReference>
<dbReference type="PANTHER" id="PTHR34128">
    <property type="entry name" value="CYTOCHROME C-TYPE BIOGENESIS PROTEIN CCME HOMOLOG, MITOCHONDRIAL"/>
    <property type="match status" value="1"/>
</dbReference>
<dbReference type="PANTHER" id="PTHR34128:SF2">
    <property type="entry name" value="CYTOCHROME C-TYPE BIOGENESIS PROTEIN CCME HOMOLOG, MITOCHONDRIAL"/>
    <property type="match status" value="1"/>
</dbReference>
<dbReference type="Pfam" id="PF03100">
    <property type="entry name" value="CcmE"/>
    <property type="match status" value="1"/>
</dbReference>
<dbReference type="SUPFAM" id="SSF82093">
    <property type="entry name" value="Heme chaperone CcmE"/>
    <property type="match status" value="1"/>
</dbReference>
<accession>Q8YG29</accession>